<name>RL1_BAUCH</name>
<keyword id="KW-1185">Reference proteome</keyword>
<keyword id="KW-0678">Repressor</keyword>
<keyword id="KW-0687">Ribonucleoprotein</keyword>
<keyword id="KW-0689">Ribosomal protein</keyword>
<keyword id="KW-0694">RNA-binding</keyword>
<keyword id="KW-0699">rRNA-binding</keyword>
<keyword id="KW-0810">Translation regulation</keyword>
<keyword id="KW-0820">tRNA-binding</keyword>
<evidence type="ECO:0000255" key="1">
    <source>
        <dbReference type="HAMAP-Rule" id="MF_01318"/>
    </source>
</evidence>
<evidence type="ECO:0000305" key="2"/>
<gene>
    <name evidence="1" type="primary">rplA</name>
    <name type="ordered locus">BCI_0499</name>
</gene>
<protein>
    <recommendedName>
        <fullName evidence="1">Large ribosomal subunit protein uL1</fullName>
    </recommendedName>
    <alternativeName>
        <fullName evidence="2">50S ribosomal protein L1</fullName>
    </alternativeName>
</protein>
<reference key="1">
    <citation type="journal article" date="2006" name="PLoS Biol.">
        <title>Metabolic complementarity and genomics of the dual bacterial symbiosis of sharpshooters.</title>
        <authorList>
            <person name="Wu D."/>
            <person name="Daugherty S.C."/>
            <person name="Van Aken S.E."/>
            <person name="Pai G.H."/>
            <person name="Watkins K.L."/>
            <person name="Khouri H."/>
            <person name="Tallon L.J."/>
            <person name="Zaborsky J.M."/>
            <person name="Dunbar H.E."/>
            <person name="Tran P.L."/>
            <person name="Moran N.A."/>
            <person name="Eisen J.A."/>
        </authorList>
    </citation>
    <scope>NUCLEOTIDE SEQUENCE [LARGE SCALE GENOMIC DNA]</scope>
</reference>
<feature type="chain" id="PRO_0000307963" description="Large ribosomal subunit protein uL1">
    <location>
        <begin position="1"/>
        <end position="234"/>
    </location>
</feature>
<dbReference type="EMBL" id="CP000238">
    <property type="protein sequence ID" value="ABF13826.1"/>
    <property type="molecule type" value="Genomic_DNA"/>
</dbReference>
<dbReference type="RefSeq" id="WP_011520667.1">
    <property type="nucleotide sequence ID" value="NC_007984.1"/>
</dbReference>
<dbReference type="SMR" id="Q1LSY0"/>
<dbReference type="STRING" id="374463.BCI_0499"/>
<dbReference type="KEGG" id="bci:BCI_0499"/>
<dbReference type="HOGENOM" id="CLU_062853_0_0_6"/>
<dbReference type="OrthoDB" id="9803740at2"/>
<dbReference type="Proteomes" id="UP000002427">
    <property type="component" value="Chromosome"/>
</dbReference>
<dbReference type="GO" id="GO:0022625">
    <property type="term" value="C:cytosolic large ribosomal subunit"/>
    <property type="evidence" value="ECO:0007669"/>
    <property type="project" value="TreeGrafter"/>
</dbReference>
<dbReference type="GO" id="GO:0019843">
    <property type="term" value="F:rRNA binding"/>
    <property type="evidence" value="ECO:0007669"/>
    <property type="project" value="UniProtKB-UniRule"/>
</dbReference>
<dbReference type="GO" id="GO:0003735">
    <property type="term" value="F:structural constituent of ribosome"/>
    <property type="evidence" value="ECO:0007669"/>
    <property type="project" value="InterPro"/>
</dbReference>
<dbReference type="GO" id="GO:0000049">
    <property type="term" value="F:tRNA binding"/>
    <property type="evidence" value="ECO:0007669"/>
    <property type="project" value="UniProtKB-KW"/>
</dbReference>
<dbReference type="GO" id="GO:0006417">
    <property type="term" value="P:regulation of translation"/>
    <property type="evidence" value="ECO:0007669"/>
    <property type="project" value="UniProtKB-KW"/>
</dbReference>
<dbReference type="GO" id="GO:0006412">
    <property type="term" value="P:translation"/>
    <property type="evidence" value="ECO:0007669"/>
    <property type="project" value="UniProtKB-UniRule"/>
</dbReference>
<dbReference type="CDD" id="cd00403">
    <property type="entry name" value="Ribosomal_L1"/>
    <property type="match status" value="1"/>
</dbReference>
<dbReference type="FunFam" id="3.40.50.790:FF:000001">
    <property type="entry name" value="50S ribosomal protein L1"/>
    <property type="match status" value="1"/>
</dbReference>
<dbReference type="Gene3D" id="3.30.190.20">
    <property type="match status" value="1"/>
</dbReference>
<dbReference type="Gene3D" id="3.40.50.790">
    <property type="match status" value="1"/>
</dbReference>
<dbReference type="HAMAP" id="MF_01318_B">
    <property type="entry name" value="Ribosomal_uL1_B"/>
    <property type="match status" value="1"/>
</dbReference>
<dbReference type="InterPro" id="IPR005878">
    <property type="entry name" value="Ribosom_uL1_bac-type"/>
</dbReference>
<dbReference type="InterPro" id="IPR002143">
    <property type="entry name" value="Ribosomal_uL1"/>
</dbReference>
<dbReference type="InterPro" id="IPR023674">
    <property type="entry name" value="Ribosomal_uL1-like"/>
</dbReference>
<dbReference type="InterPro" id="IPR028364">
    <property type="entry name" value="Ribosomal_uL1/biogenesis"/>
</dbReference>
<dbReference type="InterPro" id="IPR016095">
    <property type="entry name" value="Ribosomal_uL1_3-a/b-sand"/>
</dbReference>
<dbReference type="InterPro" id="IPR023673">
    <property type="entry name" value="Ribosomal_uL1_CS"/>
</dbReference>
<dbReference type="NCBIfam" id="TIGR01169">
    <property type="entry name" value="rplA_bact"/>
    <property type="match status" value="1"/>
</dbReference>
<dbReference type="PANTHER" id="PTHR36427">
    <property type="entry name" value="54S RIBOSOMAL PROTEIN L1, MITOCHONDRIAL"/>
    <property type="match status" value="1"/>
</dbReference>
<dbReference type="PANTHER" id="PTHR36427:SF3">
    <property type="entry name" value="LARGE RIBOSOMAL SUBUNIT PROTEIN UL1M"/>
    <property type="match status" value="1"/>
</dbReference>
<dbReference type="Pfam" id="PF00687">
    <property type="entry name" value="Ribosomal_L1"/>
    <property type="match status" value="1"/>
</dbReference>
<dbReference type="PIRSF" id="PIRSF002155">
    <property type="entry name" value="Ribosomal_L1"/>
    <property type="match status" value="1"/>
</dbReference>
<dbReference type="SUPFAM" id="SSF56808">
    <property type="entry name" value="Ribosomal protein L1"/>
    <property type="match status" value="1"/>
</dbReference>
<dbReference type="PROSITE" id="PS01199">
    <property type="entry name" value="RIBOSOMAL_L1"/>
    <property type="match status" value="1"/>
</dbReference>
<proteinExistence type="inferred from homology"/>
<organism>
    <name type="scientific">Baumannia cicadellinicola subsp. Homalodisca coagulata</name>
    <dbReference type="NCBI Taxonomy" id="374463"/>
    <lineage>
        <taxon>Bacteria</taxon>
        <taxon>Pseudomonadati</taxon>
        <taxon>Pseudomonadota</taxon>
        <taxon>Gammaproteobacteria</taxon>
        <taxon>Candidatus Palibaumannia</taxon>
    </lineage>
</organism>
<sequence>MGKTTKRMRMISNQIDRTKQYNIHEAIPLLKDHATVKFIESLDVAVKLGINARKSSQNIHSATILPHGIGRSIKVAVFAQGINVSIAETAGADLVGMDNLAAQITKGNINFDVVIASPDTMHLVSTLGQILGPKGMMPNTKTGTITQNIALAIKEIKSGQIRYHNDKNGIIHTTIGKINFESYQLIENLEALLRALKKDKPLQTKGIYFKKICLSTTMGPSLTIDQCSLSTLVK</sequence>
<comment type="function">
    <text evidence="1">Binds directly to 23S rRNA. The L1 stalk is quite mobile in the ribosome, and is involved in E site tRNA release.</text>
</comment>
<comment type="function">
    <text evidence="1">Protein L1 is also a translational repressor protein, it controls the translation of the L11 operon by binding to its mRNA.</text>
</comment>
<comment type="subunit">
    <text evidence="1">Part of the 50S ribosomal subunit.</text>
</comment>
<comment type="similarity">
    <text evidence="1">Belongs to the universal ribosomal protein uL1 family.</text>
</comment>
<accession>Q1LSY0</accession>